<keyword id="KW-0413">Isomerase</keyword>
<keyword id="KW-1185">Reference proteome</keyword>
<feature type="chain" id="PRO_1000016987" description="Ribose-5-phosphate isomerase A">
    <location>
        <begin position="1"/>
        <end position="220"/>
    </location>
</feature>
<feature type="active site" description="Proton acceptor" evidence="1">
    <location>
        <position position="103"/>
    </location>
</feature>
<feature type="binding site" evidence="1">
    <location>
        <begin position="28"/>
        <end position="31"/>
    </location>
    <ligand>
        <name>substrate</name>
    </ligand>
</feature>
<feature type="binding site" evidence="1">
    <location>
        <begin position="81"/>
        <end position="84"/>
    </location>
    <ligand>
        <name>substrate</name>
    </ligand>
</feature>
<feature type="binding site" evidence="1">
    <location>
        <begin position="94"/>
        <end position="97"/>
    </location>
    <ligand>
        <name>substrate</name>
    </ligand>
</feature>
<feature type="binding site" evidence="1">
    <location>
        <position position="121"/>
    </location>
    <ligand>
        <name>substrate</name>
    </ligand>
</feature>
<accession>A3D7R0</accession>
<proteinExistence type="inferred from homology"/>
<comment type="function">
    <text evidence="1">Catalyzes the reversible conversion of ribose-5-phosphate to ribulose 5-phosphate.</text>
</comment>
<comment type="catalytic activity">
    <reaction evidence="1">
        <text>aldehydo-D-ribose 5-phosphate = D-ribulose 5-phosphate</text>
        <dbReference type="Rhea" id="RHEA:14657"/>
        <dbReference type="ChEBI" id="CHEBI:58121"/>
        <dbReference type="ChEBI" id="CHEBI:58273"/>
        <dbReference type="EC" id="5.3.1.6"/>
    </reaction>
</comment>
<comment type="pathway">
    <text evidence="1">Carbohydrate degradation; pentose phosphate pathway; D-ribose 5-phosphate from D-ribulose 5-phosphate (non-oxidative stage): step 1/1.</text>
</comment>
<comment type="subunit">
    <text evidence="1">Homodimer.</text>
</comment>
<comment type="similarity">
    <text evidence="1">Belongs to the ribose 5-phosphate isomerase family.</text>
</comment>
<protein>
    <recommendedName>
        <fullName evidence="1">Ribose-5-phosphate isomerase A</fullName>
        <ecNumber evidence="1">5.3.1.6</ecNumber>
    </recommendedName>
    <alternativeName>
        <fullName evidence="1">Phosphoriboisomerase A</fullName>
        <shortName evidence="1">PRI</shortName>
    </alternativeName>
</protein>
<sequence>MTQDEMKKAAGWAALKYVERDSIVGVGTGSTVNHFIDALATMKADIEGAVSSSEASTQKMKALGIPVYDLNSVDRLSVYVDGADEINDRMDMIKGGGAALTREKIVAAVAEKFICIVDNTKQVDILGEFPLPVEVIPMARSYVARQLVKLGGDPVYREGVVTDNGNVILDVYNLKILNPKELESQINEIVGVVTNGLFAKRGADVLLVGTPDGVKTFTAE</sequence>
<gene>
    <name evidence="1" type="primary">rpiA</name>
    <name type="ordered locus">Sbal_3293</name>
</gene>
<name>RPIA_SHEB5</name>
<evidence type="ECO:0000255" key="1">
    <source>
        <dbReference type="HAMAP-Rule" id="MF_00170"/>
    </source>
</evidence>
<organism>
    <name type="scientific">Shewanella baltica (strain OS155 / ATCC BAA-1091)</name>
    <dbReference type="NCBI Taxonomy" id="325240"/>
    <lineage>
        <taxon>Bacteria</taxon>
        <taxon>Pseudomonadati</taxon>
        <taxon>Pseudomonadota</taxon>
        <taxon>Gammaproteobacteria</taxon>
        <taxon>Alteromonadales</taxon>
        <taxon>Shewanellaceae</taxon>
        <taxon>Shewanella</taxon>
    </lineage>
</organism>
<reference key="1">
    <citation type="submission" date="2007-02" db="EMBL/GenBank/DDBJ databases">
        <title>Complete sequence of chromosome of Shewanella baltica OS155.</title>
        <authorList>
            <consortium name="US DOE Joint Genome Institute"/>
            <person name="Copeland A."/>
            <person name="Lucas S."/>
            <person name="Lapidus A."/>
            <person name="Barry K."/>
            <person name="Detter J.C."/>
            <person name="Glavina del Rio T."/>
            <person name="Hammon N."/>
            <person name="Israni S."/>
            <person name="Dalin E."/>
            <person name="Tice H."/>
            <person name="Pitluck S."/>
            <person name="Sims D.R."/>
            <person name="Brettin T."/>
            <person name="Bruce D."/>
            <person name="Han C."/>
            <person name="Tapia R."/>
            <person name="Brainard J."/>
            <person name="Schmutz J."/>
            <person name="Larimer F."/>
            <person name="Land M."/>
            <person name="Hauser L."/>
            <person name="Kyrpides N."/>
            <person name="Mikhailova N."/>
            <person name="Brettar I."/>
            <person name="Klappenbach J."/>
            <person name="Konstantinidis K."/>
            <person name="Rodrigues J."/>
            <person name="Tiedje J."/>
            <person name="Richardson P."/>
        </authorList>
    </citation>
    <scope>NUCLEOTIDE SEQUENCE [LARGE SCALE GENOMIC DNA]</scope>
    <source>
        <strain>OS155 / ATCC BAA-1091</strain>
    </source>
</reference>
<dbReference type="EC" id="5.3.1.6" evidence="1"/>
<dbReference type="EMBL" id="CP000563">
    <property type="protein sequence ID" value="ABN62773.1"/>
    <property type="molecule type" value="Genomic_DNA"/>
</dbReference>
<dbReference type="RefSeq" id="WP_006082772.1">
    <property type="nucleotide sequence ID" value="NC_009052.1"/>
</dbReference>
<dbReference type="SMR" id="A3D7R0"/>
<dbReference type="STRING" id="325240.Sbal_3293"/>
<dbReference type="GeneID" id="11773556"/>
<dbReference type="KEGG" id="sbl:Sbal_3293"/>
<dbReference type="HOGENOM" id="CLU_056590_1_1_6"/>
<dbReference type="OrthoDB" id="5870696at2"/>
<dbReference type="UniPathway" id="UPA00115">
    <property type="reaction ID" value="UER00412"/>
</dbReference>
<dbReference type="Proteomes" id="UP000001557">
    <property type="component" value="Chromosome"/>
</dbReference>
<dbReference type="GO" id="GO:0005829">
    <property type="term" value="C:cytosol"/>
    <property type="evidence" value="ECO:0007669"/>
    <property type="project" value="TreeGrafter"/>
</dbReference>
<dbReference type="GO" id="GO:0004751">
    <property type="term" value="F:ribose-5-phosphate isomerase activity"/>
    <property type="evidence" value="ECO:0007669"/>
    <property type="project" value="UniProtKB-UniRule"/>
</dbReference>
<dbReference type="GO" id="GO:0006014">
    <property type="term" value="P:D-ribose metabolic process"/>
    <property type="evidence" value="ECO:0007669"/>
    <property type="project" value="TreeGrafter"/>
</dbReference>
<dbReference type="GO" id="GO:0009052">
    <property type="term" value="P:pentose-phosphate shunt, non-oxidative branch"/>
    <property type="evidence" value="ECO:0007669"/>
    <property type="project" value="UniProtKB-UniRule"/>
</dbReference>
<dbReference type="CDD" id="cd01398">
    <property type="entry name" value="RPI_A"/>
    <property type="match status" value="1"/>
</dbReference>
<dbReference type="FunFam" id="3.30.70.260:FF:000004">
    <property type="entry name" value="Ribose-5-phosphate isomerase A"/>
    <property type="match status" value="1"/>
</dbReference>
<dbReference type="FunFam" id="3.40.50.1360:FF:000001">
    <property type="entry name" value="Ribose-5-phosphate isomerase A"/>
    <property type="match status" value="1"/>
</dbReference>
<dbReference type="Gene3D" id="3.30.70.260">
    <property type="match status" value="1"/>
</dbReference>
<dbReference type="Gene3D" id="3.40.50.1360">
    <property type="match status" value="1"/>
</dbReference>
<dbReference type="HAMAP" id="MF_00170">
    <property type="entry name" value="Rib_5P_isom_A"/>
    <property type="match status" value="1"/>
</dbReference>
<dbReference type="InterPro" id="IPR037171">
    <property type="entry name" value="NagB/RpiA_transferase-like"/>
</dbReference>
<dbReference type="InterPro" id="IPR020672">
    <property type="entry name" value="Ribose5P_isomerase_typA_subgr"/>
</dbReference>
<dbReference type="InterPro" id="IPR004788">
    <property type="entry name" value="Ribose5P_isomerase_type_A"/>
</dbReference>
<dbReference type="NCBIfam" id="NF001924">
    <property type="entry name" value="PRK00702.1"/>
    <property type="match status" value="1"/>
</dbReference>
<dbReference type="NCBIfam" id="TIGR00021">
    <property type="entry name" value="rpiA"/>
    <property type="match status" value="1"/>
</dbReference>
<dbReference type="PANTHER" id="PTHR11934">
    <property type="entry name" value="RIBOSE-5-PHOSPHATE ISOMERASE"/>
    <property type="match status" value="1"/>
</dbReference>
<dbReference type="PANTHER" id="PTHR11934:SF0">
    <property type="entry name" value="RIBOSE-5-PHOSPHATE ISOMERASE"/>
    <property type="match status" value="1"/>
</dbReference>
<dbReference type="Pfam" id="PF06026">
    <property type="entry name" value="Rib_5-P_isom_A"/>
    <property type="match status" value="1"/>
</dbReference>
<dbReference type="SUPFAM" id="SSF75445">
    <property type="entry name" value="D-ribose-5-phosphate isomerase (RpiA), lid domain"/>
    <property type="match status" value="1"/>
</dbReference>
<dbReference type="SUPFAM" id="SSF100950">
    <property type="entry name" value="NagB/RpiA/CoA transferase-like"/>
    <property type="match status" value="1"/>
</dbReference>